<protein>
    <recommendedName>
        <fullName>Patatin-like phospholipase domain-containing protein ACLA_029670</fullName>
        <ecNumber>3.1.1.-</ecNumber>
    </recommendedName>
</protein>
<accession>A1CRG6</accession>
<sequence>MTSAEKSATRNIYDPSALPDYDTQFIKPDELHQFEKALNAPAAAPLVAINDWRPINQRVRKNRRTKPRRSKDETREGVLYTVLKWPFLFIVFAWITVLGIAYALTRLYIFLYEQCVTWRGKRERLRRELSVQTNYRDWLTAAQALDTHLGNQKWKETDEYAYYDHLTINKVVAQLKQARKAAESEVHNGRSGVSDLPAVEDLCALLEACVKNNFAGVENPRLYSESYSGTKDLVQEYIDEVQACMQLILDSKQIPAEEKYQHFKHLDTNFGRTALCLSGGATFAYYHFGVIRALLDNDVLPEIITGTSGGALVAALVATRTDEELKQLLVPALAYRIRACHEGFTTWVWRWWRTGARFDTVDWARQCSWFCRGSTTFREAYERTGRILNVSCVPSDPHSPTILANYLTSPDCVIWSAVLASAAVPGILNPVVLMTKKRDGTLAPYSFGHKWKDGSLRTDIPIKALNLHFNVNFTIVSQVNPHINLFFFSSRGTVGRPVTHRKGRGWRGGFLGSAIEQYIKLDMNKWLRVLRHLELLPRPLGQDWSEIWLQKFSGTITIWPKSIPSDFYHILSDPSPERLARMLHVGKQSAFPKIQFIKNRLKIENTIMQGLQQSSPGGDRVLLPILSRRLQNRAQEHADAMVERLDHSFPERHSDYKDESHYTEVSDSLSTNSSRPHTPDARRGSIFEEMRRQSAVFFDDPDMYGDEDAIAT</sequence>
<keyword id="KW-0378">Hydrolase</keyword>
<keyword id="KW-0442">Lipid degradation</keyword>
<keyword id="KW-0443">Lipid metabolism</keyword>
<keyword id="KW-0472">Membrane</keyword>
<keyword id="KW-1185">Reference proteome</keyword>
<keyword id="KW-0812">Transmembrane</keyword>
<keyword id="KW-1133">Transmembrane helix</keyword>
<reference key="1">
    <citation type="journal article" date="2008" name="PLoS Genet.">
        <title>Genomic islands in the pathogenic filamentous fungus Aspergillus fumigatus.</title>
        <authorList>
            <person name="Fedorova N.D."/>
            <person name="Khaldi N."/>
            <person name="Joardar V.S."/>
            <person name="Maiti R."/>
            <person name="Amedeo P."/>
            <person name="Anderson M.J."/>
            <person name="Crabtree J."/>
            <person name="Silva J.C."/>
            <person name="Badger J.H."/>
            <person name="Albarraq A."/>
            <person name="Angiuoli S."/>
            <person name="Bussey H."/>
            <person name="Bowyer P."/>
            <person name="Cotty P.J."/>
            <person name="Dyer P.S."/>
            <person name="Egan A."/>
            <person name="Galens K."/>
            <person name="Fraser-Liggett C.M."/>
            <person name="Haas B.J."/>
            <person name="Inman J.M."/>
            <person name="Kent R."/>
            <person name="Lemieux S."/>
            <person name="Malavazi I."/>
            <person name="Orvis J."/>
            <person name="Roemer T."/>
            <person name="Ronning C.M."/>
            <person name="Sundaram J.P."/>
            <person name="Sutton G."/>
            <person name="Turner G."/>
            <person name="Venter J.C."/>
            <person name="White O.R."/>
            <person name="Whitty B.R."/>
            <person name="Youngman P."/>
            <person name="Wolfe K.H."/>
            <person name="Goldman G.H."/>
            <person name="Wortman J.R."/>
            <person name="Jiang B."/>
            <person name="Denning D.W."/>
            <person name="Nierman W.C."/>
        </authorList>
    </citation>
    <scope>NUCLEOTIDE SEQUENCE [LARGE SCALE GENOMIC DNA]</scope>
    <source>
        <strain>ATCC 1007 / CBS 513.65 / DSM 816 / NCTC 3887 / NRRL 1 / QM 1276 / 107</strain>
    </source>
</reference>
<name>PLPL_ASPCL</name>
<feature type="chain" id="PRO_0000295549" description="Patatin-like phospholipase domain-containing protein ACLA_029670">
    <location>
        <begin position="1"/>
        <end position="712"/>
    </location>
</feature>
<feature type="transmembrane region" description="Helical" evidence="2">
    <location>
        <begin position="85"/>
        <end position="105"/>
    </location>
</feature>
<feature type="domain" description="PNPLA" evidence="3">
    <location>
        <begin position="275"/>
        <end position="466"/>
    </location>
</feature>
<feature type="region of interest" description="Disordered" evidence="4">
    <location>
        <begin position="1"/>
        <end position="20"/>
    </location>
</feature>
<feature type="region of interest" description="Disordered" evidence="4">
    <location>
        <begin position="649"/>
        <end position="686"/>
    </location>
</feature>
<feature type="short sequence motif" description="GXSXG" evidence="3">
    <location>
        <begin position="306"/>
        <end position="310"/>
    </location>
</feature>
<feature type="compositionally biased region" description="Polar residues" evidence="4">
    <location>
        <begin position="1"/>
        <end position="10"/>
    </location>
</feature>
<feature type="compositionally biased region" description="Basic and acidic residues" evidence="4">
    <location>
        <begin position="649"/>
        <end position="664"/>
    </location>
</feature>
<feature type="compositionally biased region" description="Polar residues" evidence="4">
    <location>
        <begin position="665"/>
        <end position="676"/>
    </location>
</feature>
<feature type="compositionally biased region" description="Basic and acidic residues" evidence="4">
    <location>
        <begin position="677"/>
        <end position="686"/>
    </location>
</feature>
<feature type="active site" description="Nucleophile" evidence="3">
    <location>
        <position position="308"/>
    </location>
</feature>
<feature type="active site" description="Proton acceptor" evidence="3">
    <location>
        <position position="453"/>
    </location>
</feature>
<evidence type="ECO:0000250" key="1"/>
<evidence type="ECO:0000255" key="2"/>
<evidence type="ECO:0000255" key="3">
    <source>
        <dbReference type="PROSITE-ProRule" id="PRU01161"/>
    </source>
</evidence>
<evidence type="ECO:0000256" key="4">
    <source>
        <dbReference type="SAM" id="MobiDB-lite"/>
    </source>
</evidence>
<evidence type="ECO:0000305" key="5"/>
<comment type="function">
    <text evidence="1">Probable lipid hydrolase.</text>
</comment>
<comment type="subcellular location">
    <subcellularLocation>
        <location evidence="5">Membrane</location>
        <topology evidence="5">Single-pass membrane protein</topology>
    </subcellularLocation>
</comment>
<comment type="similarity">
    <text evidence="5">Belongs to the PLPL family.</text>
</comment>
<dbReference type="EC" id="3.1.1.-"/>
<dbReference type="EMBL" id="DS027059">
    <property type="protein sequence ID" value="EAW08237.1"/>
    <property type="molecule type" value="Genomic_DNA"/>
</dbReference>
<dbReference type="RefSeq" id="XP_001269663.1">
    <property type="nucleotide sequence ID" value="XM_001269662.1"/>
</dbReference>
<dbReference type="STRING" id="344612.A1CRG6"/>
<dbReference type="EnsemblFungi" id="EAW08237">
    <property type="protein sequence ID" value="EAW08237"/>
    <property type="gene ID" value="ACLA_029670"/>
</dbReference>
<dbReference type="GeneID" id="4700957"/>
<dbReference type="KEGG" id="act:ACLA_029670"/>
<dbReference type="VEuPathDB" id="FungiDB:ACLA_029670"/>
<dbReference type="eggNOG" id="KOG2214">
    <property type="taxonomic scope" value="Eukaryota"/>
</dbReference>
<dbReference type="HOGENOM" id="CLU_009031_2_2_1"/>
<dbReference type="OMA" id="CSWFTRG"/>
<dbReference type="OrthoDB" id="15478at2759"/>
<dbReference type="Proteomes" id="UP000006701">
    <property type="component" value="Unassembled WGS sequence"/>
</dbReference>
<dbReference type="GO" id="GO:0005811">
    <property type="term" value="C:lipid droplet"/>
    <property type="evidence" value="ECO:0007669"/>
    <property type="project" value="EnsemblFungi"/>
</dbReference>
<dbReference type="GO" id="GO:0016020">
    <property type="term" value="C:membrane"/>
    <property type="evidence" value="ECO:0007669"/>
    <property type="project" value="UniProtKB-SubCell"/>
</dbReference>
<dbReference type="GO" id="GO:0004806">
    <property type="term" value="F:triacylglycerol lipase activity"/>
    <property type="evidence" value="ECO:0007669"/>
    <property type="project" value="EnsemblFungi"/>
</dbReference>
<dbReference type="GO" id="GO:1990748">
    <property type="term" value="P:cellular detoxification"/>
    <property type="evidence" value="ECO:0007669"/>
    <property type="project" value="EnsemblFungi"/>
</dbReference>
<dbReference type="GO" id="GO:0016042">
    <property type="term" value="P:lipid catabolic process"/>
    <property type="evidence" value="ECO:0007669"/>
    <property type="project" value="UniProtKB-KW"/>
</dbReference>
<dbReference type="GO" id="GO:0006642">
    <property type="term" value="P:triglyceride mobilization"/>
    <property type="evidence" value="ECO:0007669"/>
    <property type="project" value="EnsemblFungi"/>
</dbReference>
<dbReference type="CDD" id="cd07232">
    <property type="entry name" value="Pat_PLPL"/>
    <property type="match status" value="1"/>
</dbReference>
<dbReference type="Gene3D" id="3.40.1090.10">
    <property type="entry name" value="Cytosolic phospholipase A2 catalytic domain"/>
    <property type="match status" value="2"/>
</dbReference>
<dbReference type="InterPro" id="IPR016035">
    <property type="entry name" value="Acyl_Trfase/lysoPLipase"/>
</dbReference>
<dbReference type="InterPro" id="IPR050301">
    <property type="entry name" value="NTE"/>
</dbReference>
<dbReference type="InterPro" id="IPR002641">
    <property type="entry name" value="PNPLA_dom"/>
</dbReference>
<dbReference type="InterPro" id="IPR021771">
    <property type="entry name" value="Triacylglycerol_lipase_N"/>
</dbReference>
<dbReference type="PANTHER" id="PTHR14226">
    <property type="entry name" value="NEUROPATHY TARGET ESTERASE/SWISS CHEESE D.MELANOGASTER"/>
    <property type="match status" value="1"/>
</dbReference>
<dbReference type="PANTHER" id="PTHR14226:SF66">
    <property type="entry name" value="TRIACYLGLYCEROL LIPASE PTL2"/>
    <property type="match status" value="1"/>
</dbReference>
<dbReference type="Pfam" id="PF11815">
    <property type="entry name" value="DUF3336"/>
    <property type="match status" value="1"/>
</dbReference>
<dbReference type="Pfam" id="PF01734">
    <property type="entry name" value="Patatin"/>
    <property type="match status" value="1"/>
</dbReference>
<dbReference type="SUPFAM" id="SSF52151">
    <property type="entry name" value="FabD/lysophospholipase-like"/>
    <property type="match status" value="1"/>
</dbReference>
<dbReference type="PROSITE" id="PS51635">
    <property type="entry name" value="PNPLA"/>
    <property type="match status" value="1"/>
</dbReference>
<organism>
    <name type="scientific">Aspergillus clavatus (strain ATCC 1007 / CBS 513.65 / DSM 816 / NCTC 3887 / NRRL 1 / QM 1276 / 107)</name>
    <dbReference type="NCBI Taxonomy" id="344612"/>
    <lineage>
        <taxon>Eukaryota</taxon>
        <taxon>Fungi</taxon>
        <taxon>Dikarya</taxon>
        <taxon>Ascomycota</taxon>
        <taxon>Pezizomycotina</taxon>
        <taxon>Eurotiomycetes</taxon>
        <taxon>Eurotiomycetidae</taxon>
        <taxon>Eurotiales</taxon>
        <taxon>Aspergillaceae</taxon>
        <taxon>Aspergillus</taxon>
        <taxon>Aspergillus subgen. Fumigati</taxon>
    </lineage>
</organism>
<proteinExistence type="inferred from homology"/>
<gene>
    <name type="ORF">ACLA_029670</name>
</gene>